<feature type="chain" id="PRO_0000355485" description="Large ribosomal subunit protein bL20c">
    <location>
        <begin position="1"/>
        <end position="118"/>
    </location>
</feature>
<comment type="function">
    <text evidence="1">Binds directly to 23S ribosomal RNA and is necessary for the in vitro assembly process of the 50S ribosomal subunit. It is not involved in the protein synthesizing functions of that subunit.</text>
</comment>
<comment type="subcellular location">
    <subcellularLocation>
        <location>Plastid</location>
    </subcellularLocation>
</comment>
<comment type="similarity">
    <text evidence="1">Belongs to the bacterial ribosomal protein bL20 family.</text>
</comment>
<gene>
    <name evidence="1" type="primary">rpl20</name>
</gene>
<name>RK20_ANEMR</name>
<keyword id="KW-0934">Plastid</keyword>
<keyword id="KW-0687">Ribonucleoprotein</keyword>
<keyword id="KW-0689">Ribosomal protein</keyword>
<keyword id="KW-0694">RNA-binding</keyword>
<keyword id="KW-0699">rRNA-binding</keyword>
<evidence type="ECO:0000255" key="1">
    <source>
        <dbReference type="HAMAP-Rule" id="MF_00382"/>
    </source>
</evidence>
<evidence type="ECO:0000305" key="2"/>
<organism>
    <name type="scientific">Aneura mirabilis</name>
    <name type="common">Parasitic liverwort</name>
    <name type="synonym">Cryptothallus mirabilis</name>
    <dbReference type="NCBI Taxonomy" id="280810"/>
    <lineage>
        <taxon>Eukaryota</taxon>
        <taxon>Viridiplantae</taxon>
        <taxon>Streptophyta</taxon>
        <taxon>Embryophyta</taxon>
        <taxon>Marchantiophyta</taxon>
        <taxon>Jungermanniopsida</taxon>
        <taxon>Metzgeriidae</taxon>
        <taxon>Metzgeriales</taxon>
        <taxon>Aneuraceae</taxon>
        <taxon>Aneura</taxon>
    </lineage>
</organism>
<reference key="1">
    <citation type="journal article" date="2008" name="Mol. Biol. Evol.">
        <title>Functional gene losses occur with minimal size reduction in the plastid genome of the parasitic liverwort Aneura mirabilis.</title>
        <authorList>
            <person name="Wickett N.J."/>
            <person name="Zhang Y."/>
            <person name="Hansen S.K."/>
            <person name="Roper J.M."/>
            <person name="Kuehl J.V."/>
            <person name="Plock S.A."/>
            <person name="Wolf P.G."/>
            <person name="dePamphilis C.W."/>
            <person name="Boore J.L."/>
            <person name="Goffinet B."/>
        </authorList>
    </citation>
    <scope>NUCLEOTIDE SEQUENCE [LARGE SCALE GENOMIC DNA]</scope>
</reference>
<accession>B0YPQ1</accession>
<geneLocation type="non-photosynthetic plastid"/>
<protein>
    <recommendedName>
        <fullName evidence="1">Large ribosomal subunit protein bL20c</fullName>
    </recommendedName>
    <alternativeName>
        <fullName evidence="2">50S ribosomal protein L20, plastid</fullName>
    </alternativeName>
</protein>
<sequence length="118" mass="13929">MTRVKRGYVARRRRKNLFTLTSGFRGTHSKLFRTANQQGMRALVASYRGRVGRKKTLRRLWIVRINAAVRSDGISYNKLIQYLYKNQILLNRKILAQIAILDRFAFFLIIRSIQREEG</sequence>
<dbReference type="EMBL" id="EU043314">
    <property type="protein sequence ID" value="ABS54498.1"/>
    <property type="molecule type" value="Genomic_DNA"/>
</dbReference>
<dbReference type="RefSeq" id="YP_001687237.1">
    <property type="nucleotide sequence ID" value="NC_010359.1"/>
</dbReference>
<dbReference type="SMR" id="B0YPQ1"/>
<dbReference type="GeneID" id="5952206"/>
<dbReference type="GO" id="GO:0009536">
    <property type="term" value="C:plastid"/>
    <property type="evidence" value="ECO:0007669"/>
    <property type="project" value="UniProtKB-SubCell"/>
</dbReference>
<dbReference type="GO" id="GO:1990904">
    <property type="term" value="C:ribonucleoprotein complex"/>
    <property type="evidence" value="ECO:0007669"/>
    <property type="project" value="UniProtKB-KW"/>
</dbReference>
<dbReference type="GO" id="GO:0005840">
    <property type="term" value="C:ribosome"/>
    <property type="evidence" value="ECO:0007669"/>
    <property type="project" value="UniProtKB-KW"/>
</dbReference>
<dbReference type="GO" id="GO:0019843">
    <property type="term" value="F:rRNA binding"/>
    <property type="evidence" value="ECO:0007669"/>
    <property type="project" value="UniProtKB-KW"/>
</dbReference>
<dbReference type="GO" id="GO:0003735">
    <property type="term" value="F:structural constituent of ribosome"/>
    <property type="evidence" value="ECO:0007669"/>
    <property type="project" value="InterPro"/>
</dbReference>
<dbReference type="GO" id="GO:0006412">
    <property type="term" value="P:translation"/>
    <property type="evidence" value="ECO:0007669"/>
    <property type="project" value="InterPro"/>
</dbReference>
<dbReference type="CDD" id="cd07026">
    <property type="entry name" value="Ribosomal_L20"/>
    <property type="match status" value="1"/>
</dbReference>
<dbReference type="FunFam" id="1.10.1900.20:FF:000001">
    <property type="entry name" value="50S ribosomal protein L20"/>
    <property type="match status" value="1"/>
</dbReference>
<dbReference type="Gene3D" id="6.10.160.10">
    <property type="match status" value="1"/>
</dbReference>
<dbReference type="Gene3D" id="1.10.1900.20">
    <property type="entry name" value="Ribosomal protein L20"/>
    <property type="match status" value="1"/>
</dbReference>
<dbReference type="HAMAP" id="MF_00382">
    <property type="entry name" value="Ribosomal_bL20"/>
    <property type="match status" value="1"/>
</dbReference>
<dbReference type="InterPro" id="IPR005813">
    <property type="entry name" value="Ribosomal_bL20"/>
</dbReference>
<dbReference type="InterPro" id="IPR049946">
    <property type="entry name" value="RIBOSOMAL_L20_CS"/>
</dbReference>
<dbReference type="InterPro" id="IPR035566">
    <property type="entry name" value="Ribosomal_protein_bL20_C"/>
</dbReference>
<dbReference type="NCBIfam" id="TIGR01032">
    <property type="entry name" value="rplT_bact"/>
    <property type="match status" value="1"/>
</dbReference>
<dbReference type="PANTHER" id="PTHR10986">
    <property type="entry name" value="39S RIBOSOMAL PROTEIN L20"/>
    <property type="match status" value="1"/>
</dbReference>
<dbReference type="Pfam" id="PF00453">
    <property type="entry name" value="Ribosomal_L20"/>
    <property type="match status" value="1"/>
</dbReference>
<dbReference type="PRINTS" id="PR00062">
    <property type="entry name" value="RIBOSOMALL20"/>
</dbReference>
<dbReference type="SUPFAM" id="SSF74731">
    <property type="entry name" value="Ribosomal protein L20"/>
    <property type="match status" value="1"/>
</dbReference>
<dbReference type="PROSITE" id="PS00937">
    <property type="entry name" value="RIBOSOMAL_L20"/>
    <property type="match status" value="1"/>
</dbReference>
<proteinExistence type="inferred from homology"/>